<proteinExistence type="inferred from homology"/>
<protein>
    <recommendedName>
        <fullName evidence="1">2,3,4,5-tetrahydropyridine-2,6-dicarboxylate N-succinyltransferase</fullName>
        <ecNumber evidence="1">2.3.1.117</ecNumber>
    </recommendedName>
    <alternativeName>
        <fullName evidence="1">Tetrahydrodipicolinate N-succinyltransferase</fullName>
        <shortName evidence="1">THDP succinyltransferase</shortName>
        <shortName evidence="1">THP succinyltransferase</shortName>
        <shortName evidence="1">Tetrahydropicolinate succinylase</shortName>
    </alternativeName>
</protein>
<sequence>MSLSALESTINSAFDARDGISTSTKGEVREAVDQVLETLDKGEARVAERGADGKWKVNQWLKKAVLLSFRLNDMGVIPGGPGQATWWDKVPSKFEGWGENRFRDAGFRAVPGAVVRRSAFIAKNVVLMPSFVNLGAYVDESTMVDTWATVGSCAQIGKRVHISGGAGIGGVLEPLQAEPVIIEDDCFIGARSEVAEGVIVRKGAVLAMGVFLGASTKIVDRDTGEVFIGEVPEYSVVVPGALPGKPMKNGHIGPSTACAVIVKRVDERTRSKTSINELLRD</sequence>
<feature type="chain" id="PRO_0000196919" description="2,3,4,5-tetrahydropyridine-2,6-dicarboxylate N-succinyltransferase">
    <location>
        <begin position="1"/>
        <end position="281"/>
    </location>
</feature>
<feature type="binding site" evidence="1">
    <location>
        <position position="108"/>
    </location>
    <ligand>
        <name>substrate</name>
    </ligand>
</feature>
<feature type="binding site" evidence="1">
    <location>
        <position position="145"/>
    </location>
    <ligand>
        <name>substrate</name>
    </ligand>
</feature>
<accession>Q89BP4</accession>
<reference key="1">
    <citation type="journal article" date="2002" name="DNA Res.">
        <title>Complete genomic sequence of nitrogen-fixing symbiotic bacterium Bradyrhizobium japonicum USDA110.</title>
        <authorList>
            <person name="Kaneko T."/>
            <person name="Nakamura Y."/>
            <person name="Sato S."/>
            <person name="Minamisawa K."/>
            <person name="Uchiumi T."/>
            <person name="Sasamoto S."/>
            <person name="Watanabe A."/>
            <person name="Idesawa K."/>
            <person name="Iriguchi M."/>
            <person name="Kawashima K."/>
            <person name="Kohara M."/>
            <person name="Matsumoto M."/>
            <person name="Shimpo S."/>
            <person name="Tsuruoka H."/>
            <person name="Wada T."/>
            <person name="Yamada M."/>
            <person name="Tabata S."/>
        </authorList>
    </citation>
    <scope>NUCLEOTIDE SEQUENCE [LARGE SCALE GENOMIC DNA]</scope>
    <source>
        <strain>JCM 10833 / BCRC 13528 / IAM 13628 / NBRC 14792 / USDA 110</strain>
    </source>
</reference>
<comment type="catalytic activity">
    <reaction evidence="1">
        <text>(S)-2,3,4,5-tetrahydrodipicolinate + succinyl-CoA + H2O = (S)-2-succinylamino-6-oxoheptanedioate + CoA</text>
        <dbReference type="Rhea" id="RHEA:17325"/>
        <dbReference type="ChEBI" id="CHEBI:15377"/>
        <dbReference type="ChEBI" id="CHEBI:15685"/>
        <dbReference type="ChEBI" id="CHEBI:16845"/>
        <dbReference type="ChEBI" id="CHEBI:57287"/>
        <dbReference type="ChEBI" id="CHEBI:57292"/>
        <dbReference type="EC" id="2.3.1.117"/>
    </reaction>
</comment>
<comment type="pathway">
    <text evidence="1">Amino-acid biosynthesis; L-lysine biosynthesis via DAP pathway; LL-2,6-diaminopimelate from (S)-tetrahydrodipicolinate (succinylase route): step 1/3.</text>
</comment>
<comment type="subunit">
    <text evidence="1">Homotrimer.</text>
</comment>
<comment type="subcellular location">
    <subcellularLocation>
        <location evidence="1">Cytoplasm</location>
    </subcellularLocation>
</comment>
<comment type="similarity">
    <text evidence="1">Belongs to the transferase hexapeptide repeat family.</text>
</comment>
<organism>
    <name type="scientific">Bradyrhizobium diazoefficiens (strain JCM 10833 / BCRC 13528 / IAM 13628 / NBRC 14792 / USDA 110)</name>
    <dbReference type="NCBI Taxonomy" id="224911"/>
    <lineage>
        <taxon>Bacteria</taxon>
        <taxon>Pseudomonadati</taxon>
        <taxon>Pseudomonadota</taxon>
        <taxon>Alphaproteobacteria</taxon>
        <taxon>Hyphomicrobiales</taxon>
        <taxon>Nitrobacteraceae</taxon>
        <taxon>Bradyrhizobium</taxon>
    </lineage>
</organism>
<name>DAPD_BRADU</name>
<evidence type="ECO:0000255" key="1">
    <source>
        <dbReference type="HAMAP-Rule" id="MF_00811"/>
    </source>
</evidence>
<keyword id="KW-0012">Acyltransferase</keyword>
<keyword id="KW-0028">Amino-acid biosynthesis</keyword>
<keyword id="KW-0963">Cytoplasm</keyword>
<keyword id="KW-0220">Diaminopimelate biosynthesis</keyword>
<keyword id="KW-0457">Lysine biosynthesis</keyword>
<keyword id="KW-1185">Reference proteome</keyword>
<keyword id="KW-0677">Repeat</keyword>
<keyword id="KW-0808">Transferase</keyword>
<gene>
    <name evidence="1" type="primary">dapD</name>
    <name type="ordered locus">blr8104</name>
</gene>
<dbReference type="EC" id="2.3.1.117" evidence="1"/>
<dbReference type="EMBL" id="BA000040">
    <property type="protein sequence ID" value="BAC53369.1"/>
    <property type="molecule type" value="Genomic_DNA"/>
</dbReference>
<dbReference type="RefSeq" id="NP_774744.1">
    <property type="nucleotide sequence ID" value="NC_004463.1"/>
</dbReference>
<dbReference type="RefSeq" id="WP_011090826.1">
    <property type="nucleotide sequence ID" value="NC_004463.1"/>
</dbReference>
<dbReference type="SMR" id="Q89BP4"/>
<dbReference type="FunCoup" id="Q89BP4">
    <property type="interactions" value="284"/>
</dbReference>
<dbReference type="STRING" id="224911.AAV28_38215"/>
<dbReference type="EnsemblBacteria" id="BAC53369">
    <property type="protein sequence ID" value="BAC53369"/>
    <property type="gene ID" value="BAC53369"/>
</dbReference>
<dbReference type="GeneID" id="46495015"/>
<dbReference type="KEGG" id="bja:blr8104"/>
<dbReference type="PATRIC" id="fig|224911.44.peg.8274"/>
<dbReference type="eggNOG" id="COG2171">
    <property type="taxonomic scope" value="Bacteria"/>
</dbReference>
<dbReference type="HOGENOM" id="CLU_050859_0_1_5"/>
<dbReference type="InParanoid" id="Q89BP4"/>
<dbReference type="OrthoDB" id="9775362at2"/>
<dbReference type="PhylomeDB" id="Q89BP4"/>
<dbReference type="UniPathway" id="UPA00034">
    <property type="reaction ID" value="UER00019"/>
</dbReference>
<dbReference type="Proteomes" id="UP000002526">
    <property type="component" value="Chromosome"/>
</dbReference>
<dbReference type="GO" id="GO:0005737">
    <property type="term" value="C:cytoplasm"/>
    <property type="evidence" value="ECO:0007669"/>
    <property type="project" value="UniProtKB-SubCell"/>
</dbReference>
<dbReference type="GO" id="GO:0008666">
    <property type="term" value="F:2,3,4,5-tetrahydropyridine-2,6-dicarboxylate N-succinyltransferase activity"/>
    <property type="evidence" value="ECO:0007669"/>
    <property type="project" value="UniProtKB-UniRule"/>
</dbReference>
<dbReference type="GO" id="GO:0016779">
    <property type="term" value="F:nucleotidyltransferase activity"/>
    <property type="evidence" value="ECO:0000318"/>
    <property type="project" value="GO_Central"/>
</dbReference>
<dbReference type="GO" id="GO:0019877">
    <property type="term" value="P:diaminopimelate biosynthetic process"/>
    <property type="evidence" value="ECO:0000318"/>
    <property type="project" value="GO_Central"/>
</dbReference>
<dbReference type="GO" id="GO:0009085">
    <property type="term" value="P:lysine biosynthetic process"/>
    <property type="evidence" value="ECO:0000318"/>
    <property type="project" value="GO_Central"/>
</dbReference>
<dbReference type="GO" id="GO:0009089">
    <property type="term" value="P:lysine biosynthetic process via diaminopimelate"/>
    <property type="evidence" value="ECO:0007669"/>
    <property type="project" value="UniProtKB-UniRule"/>
</dbReference>
<dbReference type="CDD" id="cd03350">
    <property type="entry name" value="LbH_THP_succinylT"/>
    <property type="match status" value="1"/>
</dbReference>
<dbReference type="Gene3D" id="2.160.10.10">
    <property type="entry name" value="Hexapeptide repeat proteins"/>
    <property type="match status" value="1"/>
</dbReference>
<dbReference type="Gene3D" id="1.10.166.10">
    <property type="entry name" value="Tetrahydrodipicolinate-N-succinyltransferase, N-terminal domain"/>
    <property type="match status" value="1"/>
</dbReference>
<dbReference type="HAMAP" id="MF_00811">
    <property type="entry name" value="DapD"/>
    <property type="match status" value="1"/>
</dbReference>
<dbReference type="InterPro" id="IPR005664">
    <property type="entry name" value="DapD_Trfase_Hexpep_rpt_fam"/>
</dbReference>
<dbReference type="InterPro" id="IPR001451">
    <property type="entry name" value="Hexapep"/>
</dbReference>
<dbReference type="InterPro" id="IPR023180">
    <property type="entry name" value="THP_succinylTrfase_dom1"/>
</dbReference>
<dbReference type="InterPro" id="IPR037133">
    <property type="entry name" value="THP_succinylTrfase_N_sf"/>
</dbReference>
<dbReference type="InterPro" id="IPR011004">
    <property type="entry name" value="Trimer_LpxA-like_sf"/>
</dbReference>
<dbReference type="NCBIfam" id="TIGR00965">
    <property type="entry name" value="dapD"/>
    <property type="match status" value="1"/>
</dbReference>
<dbReference type="NCBIfam" id="NF008808">
    <property type="entry name" value="PRK11830.1"/>
    <property type="match status" value="1"/>
</dbReference>
<dbReference type="PANTHER" id="PTHR19136:SF52">
    <property type="entry name" value="2,3,4,5-TETRAHYDROPYRIDINE-2,6-DICARBOXYLATE N-SUCCINYLTRANSFERASE"/>
    <property type="match status" value="1"/>
</dbReference>
<dbReference type="PANTHER" id="PTHR19136">
    <property type="entry name" value="MOLYBDENUM COFACTOR GUANYLYLTRANSFERASE"/>
    <property type="match status" value="1"/>
</dbReference>
<dbReference type="Pfam" id="PF14602">
    <property type="entry name" value="Hexapep_2"/>
    <property type="match status" value="1"/>
</dbReference>
<dbReference type="Pfam" id="PF14805">
    <property type="entry name" value="THDPS_N_2"/>
    <property type="match status" value="1"/>
</dbReference>
<dbReference type="SUPFAM" id="SSF51161">
    <property type="entry name" value="Trimeric LpxA-like enzymes"/>
    <property type="match status" value="1"/>
</dbReference>